<feature type="chain" id="PRO_0000338920" description="Translation initiation factor IF-1">
    <location>
        <begin position="1"/>
        <end position="72"/>
    </location>
</feature>
<feature type="domain" description="S1-like" evidence="1">
    <location>
        <begin position="1"/>
        <end position="72"/>
    </location>
</feature>
<name>IF1_SHEPA</name>
<proteinExistence type="inferred from homology"/>
<sequence length="72" mass="8263">MAKEDNIEMQGTILETLPNTMFRVELENGHVVTAHISGKMRKNYIRILTGDKVTVQLTPYDLSKGRIVFRSR</sequence>
<comment type="function">
    <text evidence="1">One of the essential components for the initiation of protein synthesis. Stabilizes the binding of IF-2 and IF-3 on the 30S subunit to which N-formylmethionyl-tRNA(fMet) subsequently binds. Helps modulate mRNA selection, yielding the 30S pre-initiation complex (PIC). Upon addition of the 50S ribosomal subunit IF-1, IF-2 and IF-3 are released leaving the mature 70S translation initiation complex.</text>
</comment>
<comment type="subunit">
    <text evidence="1">Component of the 30S ribosomal translation pre-initiation complex which assembles on the 30S ribosome in the order IF-2 and IF-3, IF-1 and N-formylmethionyl-tRNA(fMet); mRNA recruitment can occur at any time during PIC assembly.</text>
</comment>
<comment type="subcellular location">
    <subcellularLocation>
        <location evidence="1">Cytoplasm</location>
    </subcellularLocation>
</comment>
<comment type="similarity">
    <text evidence="1">Belongs to the IF-1 family.</text>
</comment>
<protein>
    <recommendedName>
        <fullName evidence="1">Translation initiation factor IF-1</fullName>
    </recommendedName>
</protein>
<reference key="1">
    <citation type="submission" date="2007-10" db="EMBL/GenBank/DDBJ databases">
        <title>Complete sequence of Shewanella pealeana ATCC 700345.</title>
        <authorList>
            <consortium name="US DOE Joint Genome Institute"/>
            <person name="Copeland A."/>
            <person name="Lucas S."/>
            <person name="Lapidus A."/>
            <person name="Barry K."/>
            <person name="Glavina del Rio T."/>
            <person name="Dalin E."/>
            <person name="Tice H."/>
            <person name="Pitluck S."/>
            <person name="Chertkov O."/>
            <person name="Brettin T."/>
            <person name="Bruce D."/>
            <person name="Detter J.C."/>
            <person name="Han C."/>
            <person name="Schmutz J."/>
            <person name="Larimer F."/>
            <person name="Land M."/>
            <person name="Hauser L."/>
            <person name="Kyrpides N."/>
            <person name="Kim E."/>
            <person name="Zhao J.-S.Z."/>
            <person name="Manno D."/>
            <person name="Hawari J."/>
            <person name="Richardson P."/>
        </authorList>
    </citation>
    <scope>NUCLEOTIDE SEQUENCE [LARGE SCALE GENOMIC DNA]</scope>
    <source>
        <strain>ATCC 700345 / ANG-SQ1</strain>
    </source>
</reference>
<organism>
    <name type="scientific">Shewanella pealeana (strain ATCC 700345 / ANG-SQ1)</name>
    <dbReference type="NCBI Taxonomy" id="398579"/>
    <lineage>
        <taxon>Bacteria</taxon>
        <taxon>Pseudomonadati</taxon>
        <taxon>Pseudomonadota</taxon>
        <taxon>Gammaproteobacteria</taxon>
        <taxon>Alteromonadales</taxon>
        <taxon>Shewanellaceae</taxon>
        <taxon>Shewanella</taxon>
    </lineage>
</organism>
<keyword id="KW-0963">Cytoplasm</keyword>
<keyword id="KW-0396">Initiation factor</keyword>
<keyword id="KW-0648">Protein biosynthesis</keyword>
<keyword id="KW-1185">Reference proteome</keyword>
<keyword id="KW-0694">RNA-binding</keyword>
<keyword id="KW-0699">rRNA-binding</keyword>
<accession>A8H5L4</accession>
<dbReference type="EMBL" id="CP000851">
    <property type="protein sequence ID" value="ABV87851.1"/>
    <property type="molecule type" value="Genomic_DNA"/>
</dbReference>
<dbReference type="RefSeq" id="WP_005500725.1">
    <property type="nucleotide sequence ID" value="NC_009901.1"/>
</dbReference>
<dbReference type="SMR" id="A8H5L4"/>
<dbReference type="STRING" id="398579.Spea_2531"/>
<dbReference type="GeneID" id="93809506"/>
<dbReference type="KEGG" id="spl:Spea_2531"/>
<dbReference type="eggNOG" id="COG0361">
    <property type="taxonomic scope" value="Bacteria"/>
</dbReference>
<dbReference type="HOGENOM" id="CLU_151267_1_0_6"/>
<dbReference type="OrthoDB" id="9803250at2"/>
<dbReference type="Proteomes" id="UP000002608">
    <property type="component" value="Chromosome"/>
</dbReference>
<dbReference type="GO" id="GO:0005829">
    <property type="term" value="C:cytosol"/>
    <property type="evidence" value="ECO:0007669"/>
    <property type="project" value="TreeGrafter"/>
</dbReference>
<dbReference type="GO" id="GO:0043022">
    <property type="term" value="F:ribosome binding"/>
    <property type="evidence" value="ECO:0007669"/>
    <property type="project" value="UniProtKB-UniRule"/>
</dbReference>
<dbReference type="GO" id="GO:0019843">
    <property type="term" value="F:rRNA binding"/>
    <property type="evidence" value="ECO:0007669"/>
    <property type="project" value="UniProtKB-UniRule"/>
</dbReference>
<dbReference type="GO" id="GO:0003743">
    <property type="term" value="F:translation initiation factor activity"/>
    <property type="evidence" value="ECO:0007669"/>
    <property type="project" value="UniProtKB-UniRule"/>
</dbReference>
<dbReference type="CDD" id="cd04451">
    <property type="entry name" value="S1_IF1"/>
    <property type="match status" value="1"/>
</dbReference>
<dbReference type="FunFam" id="2.40.50.140:FF:000002">
    <property type="entry name" value="Translation initiation factor IF-1"/>
    <property type="match status" value="1"/>
</dbReference>
<dbReference type="Gene3D" id="2.40.50.140">
    <property type="entry name" value="Nucleic acid-binding proteins"/>
    <property type="match status" value="1"/>
</dbReference>
<dbReference type="HAMAP" id="MF_00075">
    <property type="entry name" value="IF_1"/>
    <property type="match status" value="1"/>
</dbReference>
<dbReference type="InterPro" id="IPR012340">
    <property type="entry name" value="NA-bd_OB-fold"/>
</dbReference>
<dbReference type="InterPro" id="IPR006196">
    <property type="entry name" value="RNA-binding_domain_S1_IF1"/>
</dbReference>
<dbReference type="InterPro" id="IPR003029">
    <property type="entry name" value="S1_domain"/>
</dbReference>
<dbReference type="InterPro" id="IPR004368">
    <property type="entry name" value="TIF_IF1"/>
</dbReference>
<dbReference type="NCBIfam" id="TIGR00008">
    <property type="entry name" value="infA"/>
    <property type="match status" value="1"/>
</dbReference>
<dbReference type="PANTHER" id="PTHR33370">
    <property type="entry name" value="TRANSLATION INITIATION FACTOR IF-1, CHLOROPLASTIC"/>
    <property type="match status" value="1"/>
</dbReference>
<dbReference type="PANTHER" id="PTHR33370:SF1">
    <property type="entry name" value="TRANSLATION INITIATION FACTOR IF-1, CHLOROPLASTIC"/>
    <property type="match status" value="1"/>
</dbReference>
<dbReference type="Pfam" id="PF01176">
    <property type="entry name" value="eIF-1a"/>
    <property type="match status" value="1"/>
</dbReference>
<dbReference type="SMART" id="SM00316">
    <property type="entry name" value="S1"/>
    <property type="match status" value="1"/>
</dbReference>
<dbReference type="SUPFAM" id="SSF50249">
    <property type="entry name" value="Nucleic acid-binding proteins"/>
    <property type="match status" value="1"/>
</dbReference>
<dbReference type="PROSITE" id="PS50832">
    <property type="entry name" value="S1_IF1_TYPE"/>
    <property type="match status" value="1"/>
</dbReference>
<gene>
    <name evidence="1" type="primary">infA</name>
    <name type="ordered locus">Spea_2531</name>
</gene>
<evidence type="ECO:0000255" key="1">
    <source>
        <dbReference type="HAMAP-Rule" id="MF_00075"/>
    </source>
</evidence>